<organism>
    <name type="scientific">Colwellia psychrerythraea (strain 34H / ATCC BAA-681)</name>
    <name type="common">Vibrio psychroerythus</name>
    <dbReference type="NCBI Taxonomy" id="167879"/>
    <lineage>
        <taxon>Bacteria</taxon>
        <taxon>Pseudomonadati</taxon>
        <taxon>Pseudomonadota</taxon>
        <taxon>Gammaproteobacteria</taxon>
        <taxon>Alteromonadales</taxon>
        <taxon>Colwelliaceae</taxon>
        <taxon>Colwellia</taxon>
    </lineage>
</organism>
<comment type="function">
    <text evidence="1">Catalyzes the transfer of an acyl group from acyl-phosphate (acyl-PO(4)) to glycerol-3-phosphate (G3P) to form lysophosphatidic acid (LPA). This enzyme utilizes acyl-phosphate as fatty acyl donor, but not acyl-CoA or acyl-ACP.</text>
</comment>
<comment type="catalytic activity">
    <reaction evidence="1">
        <text>an acyl phosphate + sn-glycerol 3-phosphate = a 1-acyl-sn-glycero-3-phosphate + phosphate</text>
        <dbReference type="Rhea" id="RHEA:34075"/>
        <dbReference type="ChEBI" id="CHEBI:43474"/>
        <dbReference type="ChEBI" id="CHEBI:57597"/>
        <dbReference type="ChEBI" id="CHEBI:57970"/>
        <dbReference type="ChEBI" id="CHEBI:59918"/>
        <dbReference type="EC" id="2.3.1.275"/>
    </reaction>
</comment>
<comment type="pathway">
    <text evidence="1">Lipid metabolism; phospholipid metabolism.</text>
</comment>
<comment type="subunit">
    <text evidence="1">Probably interacts with PlsX.</text>
</comment>
<comment type="subcellular location">
    <subcellularLocation>
        <location evidence="1">Cell inner membrane</location>
        <topology evidence="1">Multi-pass membrane protein</topology>
    </subcellularLocation>
</comment>
<comment type="similarity">
    <text evidence="1">Belongs to the PlsY family.</text>
</comment>
<dbReference type="EC" id="2.3.1.275" evidence="1"/>
<dbReference type="EMBL" id="CP000083">
    <property type="protein sequence ID" value="AAZ25215.1"/>
    <property type="molecule type" value="Genomic_DNA"/>
</dbReference>
<dbReference type="SMR" id="Q47W34"/>
<dbReference type="STRING" id="167879.CPS_4339"/>
<dbReference type="KEGG" id="cps:CPS_4339"/>
<dbReference type="eggNOG" id="COG0344">
    <property type="taxonomic scope" value="Bacteria"/>
</dbReference>
<dbReference type="HOGENOM" id="CLU_081254_0_2_6"/>
<dbReference type="UniPathway" id="UPA00085"/>
<dbReference type="Proteomes" id="UP000000547">
    <property type="component" value="Chromosome"/>
</dbReference>
<dbReference type="GO" id="GO:0005886">
    <property type="term" value="C:plasma membrane"/>
    <property type="evidence" value="ECO:0007669"/>
    <property type="project" value="UniProtKB-SubCell"/>
</dbReference>
<dbReference type="GO" id="GO:0043772">
    <property type="term" value="F:acyl-phosphate glycerol-3-phosphate acyltransferase activity"/>
    <property type="evidence" value="ECO:0007669"/>
    <property type="project" value="UniProtKB-UniRule"/>
</dbReference>
<dbReference type="GO" id="GO:0008654">
    <property type="term" value="P:phospholipid biosynthetic process"/>
    <property type="evidence" value="ECO:0007669"/>
    <property type="project" value="UniProtKB-UniRule"/>
</dbReference>
<dbReference type="HAMAP" id="MF_01043">
    <property type="entry name" value="PlsY"/>
    <property type="match status" value="1"/>
</dbReference>
<dbReference type="InterPro" id="IPR003811">
    <property type="entry name" value="G3P_acylTferase_PlsY"/>
</dbReference>
<dbReference type="NCBIfam" id="TIGR00023">
    <property type="entry name" value="glycerol-3-phosphate 1-O-acyltransferase PlsY"/>
    <property type="match status" value="1"/>
</dbReference>
<dbReference type="PANTHER" id="PTHR30309:SF0">
    <property type="entry name" value="GLYCEROL-3-PHOSPHATE ACYLTRANSFERASE-RELATED"/>
    <property type="match status" value="1"/>
</dbReference>
<dbReference type="PANTHER" id="PTHR30309">
    <property type="entry name" value="INNER MEMBRANE PROTEIN YGIH"/>
    <property type="match status" value="1"/>
</dbReference>
<dbReference type="Pfam" id="PF02660">
    <property type="entry name" value="G3P_acyltransf"/>
    <property type="match status" value="1"/>
</dbReference>
<dbReference type="SMART" id="SM01207">
    <property type="entry name" value="G3P_acyltransf"/>
    <property type="match status" value="1"/>
</dbReference>
<name>PLSY_COLP3</name>
<keyword id="KW-0997">Cell inner membrane</keyword>
<keyword id="KW-1003">Cell membrane</keyword>
<keyword id="KW-0444">Lipid biosynthesis</keyword>
<keyword id="KW-0443">Lipid metabolism</keyword>
<keyword id="KW-0472">Membrane</keyword>
<keyword id="KW-0594">Phospholipid biosynthesis</keyword>
<keyword id="KW-1208">Phospholipid metabolism</keyword>
<keyword id="KW-0808">Transferase</keyword>
<keyword id="KW-0812">Transmembrane</keyword>
<keyword id="KW-1133">Transmembrane helix</keyword>
<sequence>MLLLTLTMIIAAYLIGSISSAILVCRFSGLPDPRTTGSKNPGATNVLRISNKFTAATVLFLDILKGTIPVWGAYFLKIDSLYLGFIGVSACLGHMYPIFFNFKGGKAVATALGTLLPIGFTLGGLLILTWVLVVKLTKYSSLAAIVTVSIAPLYVYFLKPLYVYPTLMLSALILFRHRDNIKRLLKGTESKITHKI</sequence>
<reference key="1">
    <citation type="journal article" date="2005" name="Proc. Natl. Acad. Sci. U.S.A.">
        <title>The psychrophilic lifestyle as revealed by the genome sequence of Colwellia psychrerythraea 34H through genomic and proteomic analyses.</title>
        <authorList>
            <person name="Methe B.A."/>
            <person name="Nelson K.E."/>
            <person name="Deming J.W."/>
            <person name="Momen B."/>
            <person name="Melamud E."/>
            <person name="Zhang X."/>
            <person name="Moult J."/>
            <person name="Madupu R."/>
            <person name="Nelson W.C."/>
            <person name="Dodson R.J."/>
            <person name="Brinkac L.M."/>
            <person name="Daugherty S.C."/>
            <person name="Durkin A.S."/>
            <person name="DeBoy R.T."/>
            <person name="Kolonay J.F."/>
            <person name="Sullivan S.A."/>
            <person name="Zhou L."/>
            <person name="Davidsen T.M."/>
            <person name="Wu M."/>
            <person name="Huston A.L."/>
            <person name="Lewis M."/>
            <person name="Weaver B."/>
            <person name="Weidman J.F."/>
            <person name="Khouri H."/>
            <person name="Utterback T.R."/>
            <person name="Feldblyum T.V."/>
            <person name="Fraser C.M."/>
        </authorList>
    </citation>
    <scope>NUCLEOTIDE SEQUENCE [LARGE SCALE GENOMIC DNA]</scope>
    <source>
        <strain>34H / ATCC BAA-681</strain>
    </source>
</reference>
<feature type="chain" id="PRO_0000188347" description="Glycerol-3-phosphate acyltransferase">
    <location>
        <begin position="1"/>
        <end position="196"/>
    </location>
</feature>
<feature type="transmembrane region" description="Helical" evidence="1">
    <location>
        <begin position="4"/>
        <end position="24"/>
    </location>
</feature>
<feature type="transmembrane region" description="Helical" evidence="1">
    <location>
        <begin position="56"/>
        <end position="76"/>
    </location>
</feature>
<feature type="transmembrane region" description="Helical" evidence="1">
    <location>
        <begin position="80"/>
        <end position="100"/>
    </location>
</feature>
<feature type="transmembrane region" description="Helical" evidence="1">
    <location>
        <begin position="114"/>
        <end position="134"/>
    </location>
</feature>
<feature type="transmembrane region" description="Helical" evidence="1">
    <location>
        <begin position="155"/>
        <end position="175"/>
    </location>
</feature>
<gene>
    <name evidence="1" type="primary">plsY</name>
    <name type="ordered locus">CPS_4339</name>
</gene>
<evidence type="ECO:0000255" key="1">
    <source>
        <dbReference type="HAMAP-Rule" id="MF_01043"/>
    </source>
</evidence>
<proteinExistence type="inferred from homology"/>
<accession>Q47W34</accession>
<protein>
    <recommendedName>
        <fullName evidence="1">Glycerol-3-phosphate acyltransferase</fullName>
    </recommendedName>
    <alternativeName>
        <fullName evidence="1">Acyl-PO4 G3P acyltransferase</fullName>
    </alternativeName>
    <alternativeName>
        <fullName evidence="1">Acyl-phosphate--glycerol-3-phosphate acyltransferase</fullName>
    </alternativeName>
    <alternativeName>
        <fullName evidence="1">G3P acyltransferase</fullName>
        <shortName evidence="1">GPAT</shortName>
        <ecNumber evidence="1">2.3.1.275</ecNumber>
    </alternativeName>
    <alternativeName>
        <fullName evidence="1">Lysophosphatidic acid synthase</fullName>
        <shortName evidence="1">LPA synthase</shortName>
    </alternativeName>
</protein>